<dbReference type="EC" id="6.1.1.1" evidence="1"/>
<dbReference type="EMBL" id="CP001280">
    <property type="protein sequence ID" value="ACK50564.1"/>
    <property type="molecule type" value="Genomic_DNA"/>
</dbReference>
<dbReference type="RefSeq" id="WP_012590634.1">
    <property type="nucleotide sequence ID" value="NC_011666.1"/>
</dbReference>
<dbReference type="SMR" id="B8EI82"/>
<dbReference type="STRING" id="395965.Msil_1616"/>
<dbReference type="KEGG" id="msl:Msil_1616"/>
<dbReference type="eggNOG" id="COG0162">
    <property type="taxonomic scope" value="Bacteria"/>
</dbReference>
<dbReference type="HOGENOM" id="CLU_024003_0_3_5"/>
<dbReference type="OrthoDB" id="9804243at2"/>
<dbReference type="Proteomes" id="UP000002257">
    <property type="component" value="Chromosome"/>
</dbReference>
<dbReference type="GO" id="GO:0005829">
    <property type="term" value="C:cytosol"/>
    <property type="evidence" value="ECO:0007669"/>
    <property type="project" value="TreeGrafter"/>
</dbReference>
<dbReference type="GO" id="GO:0005524">
    <property type="term" value="F:ATP binding"/>
    <property type="evidence" value="ECO:0007669"/>
    <property type="project" value="UniProtKB-UniRule"/>
</dbReference>
<dbReference type="GO" id="GO:0003723">
    <property type="term" value="F:RNA binding"/>
    <property type="evidence" value="ECO:0007669"/>
    <property type="project" value="UniProtKB-KW"/>
</dbReference>
<dbReference type="GO" id="GO:0004831">
    <property type="term" value="F:tyrosine-tRNA ligase activity"/>
    <property type="evidence" value="ECO:0007669"/>
    <property type="project" value="UniProtKB-UniRule"/>
</dbReference>
<dbReference type="GO" id="GO:0006437">
    <property type="term" value="P:tyrosyl-tRNA aminoacylation"/>
    <property type="evidence" value="ECO:0007669"/>
    <property type="project" value="UniProtKB-UniRule"/>
</dbReference>
<dbReference type="CDD" id="cd00165">
    <property type="entry name" value="S4"/>
    <property type="match status" value="1"/>
</dbReference>
<dbReference type="CDD" id="cd00805">
    <property type="entry name" value="TyrRS_core"/>
    <property type="match status" value="1"/>
</dbReference>
<dbReference type="FunFam" id="1.10.240.10:FF:000001">
    <property type="entry name" value="Tyrosine--tRNA ligase"/>
    <property type="match status" value="1"/>
</dbReference>
<dbReference type="FunFam" id="3.40.50.620:FF:000008">
    <property type="entry name" value="Tyrosine--tRNA ligase"/>
    <property type="match status" value="1"/>
</dbReference>
<dbReference type="Gene3D" id="3.40.50.620">
    <property type="entry name" value="HUPs"/>
    <property type="match status" value="1"/>
</dbReference>
<dbReference type="Gene3D" id="3.10.290.10">
    <property type="entry name" value="RNA-binding S4 domain"/>
    <property type="match status" value="1"/>
</dbReference>
<dbReference type="Gene3D" id="1.10.240.10">
    <property type="entry name" value="Tyrosyl-Transfer RNA Synthetase"/>
    <property type="match status" value="1"/>
</dbReference>
<dbReference type="HAMAP" id="MF_02006">
    <property type="entry name" value="Tyr_tRNA_synth_type1"/>
    <property type="match status" value="1"/>
</dbReference>
<dbReference type="InterPro" id="IPR002305">
    <property type="entry name" value="aa-tRNA-synth_Ic"/>
</dbReference>
<dbReference type="InterPro" id="IPR014729">
    <property type="entry name" value="Rossmann-like_a/b/a_fold"/>
</dbReference>
<dbReference type="InterPro" id="IPR036986">
    <property type="entry name" value="S4_RNA-bd_sf"/>
</dbReference>
<dbReference type="InterPro" id="IPR002307">
    <property type="entry name" value="Tyr-tRNA-ligase"/>
</dbReference>
<dbReference type="InterPro" id="IPR024088">
    <property type="entry name" value="Tyr-tRNA-ligase_bac-type"/>
</dbReference>
<dbReference type="InterPro" id="IPR024107">
    <property type="entry name" value="Tyr-tRNA-ligase_bac_1"/>
</dbReference>
<dbReference type="NCBIfam" id="TIGR00234">
    <property type="entry name" value="tyrS"/>
    <property type="match status" value="1"/>
</dbReference>
<dbReference type="PANTHER" id="PTHR11766:SF0">
    <property type="entry name" value="TYROSINE--TRNA LIGASE, MITOCHONDRIAL"/>
    <property type="match status" value="1"/>
</dbReference>
<dbReference type="PANTHER" id="PTHR11766">
    <property type="entry name" value="TYROSYL-TRNA SYNTHETASE"/>
    <property type="match status" value="1"/>
</dbReference>
<dbReference type="Pfam" id="PF00579">
    <property type="entry name" value="tRNA-synt_1b"/>
    <property type="match status" value="1"/>
</dbReference>
<dbReference type="PRINTS" id="PR01040">
    <property type="entry name" value="TRNASYNTHTYR"/>
</dbReference>
<dbReference type="SUPFAM" id="SSF55174">
    <property type="entry name" value="Alpha-L RNA-binding motif"/>
    <property type="match status" value="1"/>
</dbReference>
<dbReference type="SUPFAM" id="SSF52374">
    <property type="entry name" value="Nucleotidylyl transferase"/>
    <property type="match status" value="1"/>
</dbReference>
<dbReference type="PROSITE" id="PS50889">
    <property type="entry name" value="S4"/>
    <property type="match status" value="1"/>
</dbReference>
<gene>
    <name evidence="1" type="primary">tyrS</name>
    <name type="ordered locus">Msil_1616</name>
</gene>
<evidence type="ECO:0000255" key="1">
    <source>
        <dbReference type="HAMAP-Rule" id="MF_02006"/>
    </source>
</evidence>
<accession>B8EI82</accession>
<proteinExistence type="inferred from homology"/>
<protein>
    <recommendedName>
        <fullName evidence="1">Tyrosine--tRNA ligase</fullName>
        <ecNumber evidence="1">6.1.1.1</ecNumber>
    </recommendedName>
    <alternativeName>
        <fullName evidence="1">Tyrosyl-tRNA synthetase</fullName>
        <shortName evidence="1">TyrRS</shortName>
    </alternativeName>
</protein>
<reference key="1">
    <citation type="journal article" date="2010" name="J. Bacteriol.">
        <title>Complete genome sequence of the aerobic facultative methanotroph Methylocella silvestris BL2.</title>
        <authorList>
            <person name="Chen Y."/>
            <person name="Crombie A."/>
            <person name="Rahman M.T."/>
            <person name="Dedysh S.N."/>
            <person name="Liesack W."/>
            <person name="Stott M.B."/>
            <person name="Alam M."/>
            <person name="Theisen A.R."/>
            <person name="Murrell J.C."/>
            <person name="Dunfield P.F."/>
        </authorList>
    </citation>
    <scope>NUCLEOTIDE SEQUENCE [LARGE SCALE GENOMIC DNA]</scope>
    <source>
        <strain>DSM 15510 / CIP 108128 / LMG 27833 / NCIMB 13906 / BL2</strain>
    </source>
</reference>
<feature type="chain" id="PRO_1000189309" description="Tyrosine--tRNA ligase">
    <location>
        <begin position="1"/>
        <end position="419"/>
    </location>
</feature>
<feature type="domain" description="S4 RNA-binding" evidence="1">
    <location>
        <begin position="353"/>
        <end position="419"/>
    </location>
</feature>
<feature type="short sequence motif" description="'HIGH' region">
    <location>
        <begin position="47"/>
        <end position="56"/>
    </location>
</feature>
<feature type="short sequence motif" description="'KMSKS' region">
    <location>
        <begin position="239"/>
        <end position="243"/>
    </location>
</feature>
<feature type="binding site" evidence="1">
    <location>
        <position position="42"/>
    </location>
    <ligand>
        <name>L-tyrosine</name>
        <dbReference type="ChEBI" id="CHEBI:58315"/>
    </ligand>
</feature>
<feature type="binding site" evidence="1">
    <location>
        <position position="179"/>
    </location>
    <ligand>
        <name>L-tyrosine</name>
        <dbReference type="ChEBI" id="CHEBI:58315"/>
    </ligand>
</feature>
<feature type="binding site" evidence="1">
    <location>
        <position position="183"/>
    </location>
    <ligand>
        <name>L-tyrosine</name>
        <dbReference type="ChEBI" id="CHEBI:58315"/>
    </ligand>
</feature>
<feature type="binding site" evidence="1">
    <location>
        <position position="242"/>
    </location>
    <ligand>
        <name>ATP</name>
        <dbReference type="ChEBI" id="CHEBI:30616"/>
    </ligand>
</feature>
<organism>
    <name type="scientific">Methylocella silvestris (strain DSM 15510 / CIP 108128 / LMG 27833 / NCIMB 13906 / BL2)</name>
    <dbReference type="NCBI Taxonomy" id="395965"/>
    <lineage>
        <taxon>Bacteria</taxon>
        <taxon>Pseudomonadati</taxon>
        <taxon>Pseudomonadota</taxon>
        <taxon>Alphaproteobacteria</taxon>
        <taxon>Hyphomicrobiales</taxon>
        <taxon>Beijerinckiaceae</taxon>
        <taxon>Methylocella</taxon>
    </lineage>
</organism>
<sequence length="419" mass="45805">MSEDFRPRSDFLQTLLLRGYVHQCSDLEGIDAKAQSGELVAYIGFDCTAPSLHVGSLVQIMMLRWLQKTGGKPIALMGGGTTQVGDPSGKDESRKILSLETIEANKAGIASVFSKFIAFGDGKTQALMVDNAEWLTALKYVDFLRDVGRHFSVNRMMAMDSVKLRLERDQELSFLEFNYMCLQAYDFVELNRRYGCVLQMGGSDQWGNIVTGLDLGRRLGAPQLYALTSPLLTTASGAKMGKTAQGAVWLNEDMLPVFDYWQFWRNCEDRDVGRFLKLFTELPLDETVRLESLGGAEINEAKKILATEATSMAHGREAALLAEEAARQTFEEGALAESLPSIDIDAAEIEAGLGVLAAFVKAGLVASTSEARRQIKGGGLRVNDAPVADERAALQQGDVASGVIKLSLGRKRHVLLKLV</sequence>
<comment type="function">
    <text evidence="1">Catalyzes the attachment of tyrosine to tRNA(Tyr) in a two-step reaction: tyrosine is first activated by ATP to form Tyr-AMP and then transferred to the acceptor end of tRNA(Tyr).</text>
</comment>
<comment type="catalytic activity">
    <reaction evidence="1">
        <text>tRNA(Tyr) + L-tyrosine + ATP = L-tyrosyl-tRNA(Tyr) + AMP + diphosphate + H(+)</text>
        <dbReference type="Rhea" id="RHEA:10220"/>
        <dbReference type="Rhea" id="RHEA-COMP:9706"/>
        <dbReference type="Rhea" id="RHEA-COMP:9707"/>
        <dbReference type="ChEBI" id="CHEBI:15378"/>
        <dbReference type="ChEBI" id="CHEBI:30616"/>
        <dbReference type="ChEBI" id="CHEBI:33019"/>
        <dbReference type="ChEBI" id="CHEBI:58315"/>
        <dbReference type="ChEBI" id="CHEBI:78442"/>
        <dbReference type="ChEBI" id="CHEBI:78536"/>
        <dbReference type="ChEBI" id="CHEBI:456215"/>
        <dbReference type="EC" id="6.1.1.1"/>
    </reaction>
</comment>
<comment type="subunit">
    <text evidence="1">Homodimer.</text>
</comment>
<comment type="subcellular location">
    <subcellularLocation>
        <location evidence="1">Cytoplasm</location>
    </subcellularLocation>
</comment>
<comment type="similarity">
    <text evidence="1">Belongs to the class-I aminoacyl-tRNA synthetase family. TyrS type 1 subfamily.</text>
</comment>
<name>SYY_METSB</name>
<keyword id="KW-0030">Aminoacyl-tRNA synthetase</keyword>
<keyword id="KW-0067">ATP-binding</keyword>
<keyword id="KW-0963">Cytoplasm</keyword>
<keyword id="KW-0436">Ligase</keyword>
<keyword id="KW-0547">Nucleotide-binding</keyword>
<keyword id="KW-0648">Protein biosynthesis</keyword>
<keyword id="KW-1185">Reference proteome</keyword>
<keyword id="KW-0694">RNA-binding</keyword>